<organism>
    <name type="scientific">Betula platyphylla</name>
    <name type="common">Asian white birch</name>
    <dbReference type="NCBI Taxonomy" id="78630"/>
    <lineage>
        <taxon>Eukaryota</taxon>
        <taxon>Viridiplantae</taxon>
        <taxon>Streptophyta</taxon>
        <taxon>Embryophyta</taxon>
        <taxon>Tracheophyta</taxon>
        <taxon>Spermatophyta</taxon>
        <taxon>Magnoliopsida</taxon>
        <taxon>eudicotyledons</taxon>
        <taxon>Gunneridae</taxon>
        <taxon>Pentapetalae</taxon>
        <taxon>rosids</taxon>
        <taxon>fabids</taxon>
        <taxon>Fagales</taxon>
        <taxon>Betulaceae</taxon>
        <taxon>Betula</taxon>
    </lineage>
</organism>
<accession>Q8W3Z3</accession>
<proteinExistence type="evidence at protein level"/>
<dbReference type="EC" id="5.4.99.8"/>
<dbReference type="EMBL" id="AB055510">
    <property type="protein sequence ID" value="BAB83086.1"/>
    <property type="molecule type" value="mRNA"/>
</dbReference>
<dbReference type="GO" id="GO:0005811">
    <property type="term" value="C:lipid droplet"/>
    <property type="evidence" value="ECO:0007669"/>
    <property type="project" value="InterPro"/>
</dbReference>
<dbReference type="GO" id="GO:0016871">
    <property type="term" value="F:cycloartenol synthase activity"/>
    <property type="evidence" value="ECO:0000314"/>
    <property type="project" value="UniProtKB"/>
</dbReference>
<dbReference type="GO" id="GO:0010686">
    <property type="term" value="P:tetracyclic triterpenoid biosynthetic process"/>
    <property type="evidence" value="ECO:0000314"/>
    <property type="project" value="UniProtKB"/>
</dbReference>
<dbReference type="CDD" id="cd02892">
    <property type="entry name" value="SQCY_1"/>
    <property type="match status" value="1"/>
</dbReference>
<dbReference type="FunFam" id="1.50.10.20:FF:000002">
    <property type="entry name" value="Terpene cyclase/mutase family member"/>
    <property type="match status" value="1"/>
</dbReference>
<dbReference type="FunFam" id="1.50.10.20:FF:000022">
    <property type="entry name" value="Terpene cyclase/mutase family member"/>
    <property type="match status" value="1"/>
</dbReference>
<dbReference type="Gene3D" id="1.50.10.20">
    <property type="match status" value="2"/>
</dbReference>
<dbReference type="InterPro" id="IPR032696">
    <property type="entry name" value="SQ_cyclase_C"/>
</dbReference>
<dbReference type="InterPro" id="IPR032697">
    <property type="entry name" value="SQ_cyclase_N"/>
</dbReference>
<dbReference type="InterPro" id="IPR018333">
    <property type="entry name" value="Squalene_cyclase"/>
</dbReference>
<dbReference type="InterPro" id="IPR002365">
    <property type="entry name" value="Terpene_synthase_CS"/>
</dbReference>
<dbReference type="InterPro" id="IPR008930">
    <property type="entry name" value="Terpenoid_cyclase/PrenylTrfase"/>
</dbReference>
<dbReference type="NCBIfam" id="TIGR01787">
    <property type="entry name" value="squalene_cyclas"/>
    <property type="match status" value="1"/>
</dbReference>
<dbReference type="PANTHER" id="PTHR11764:SF20">
    <property type="entry name" value="LANOSTEROL SYNTHASE"/>
    <property type="match status" value="1"/>
</dbReference>
<dbReference type="PANTHER" id="PTHR11764">
    <property type="entry name" value="TERPENE CYCLASE/MUTASE FAMILY MEMBER"/>
    <property type="match status" value="1"/>
</dbReference>
<dbReference type="Pfam" id="PF13243">
    <property type="entry name" value="SQHop_cyclase_C"/>
    <property type="match status" value="1"/>
</dbReference>
<dbReference type="Pfam" id="PF13249">
    <property type="entry name" value="SQHop_cyclase_N"/>
    <property type="match status" value="1"/>
</dbReference>
<dbReference type="SFLD" id="SFLDG01016">
    <property type="entry name" value="Prenyltransferase_Like_2"/>
    <property type="match status" value="1"/>
</dbReference>
<dbReference type="SUPFAM" id="SSF48239">
    <property type="entry name" value="Terpenoid cyclases/Protein prenyltransferases"/>
    <property type="match status" value="2"/>
</dbReference>
<dbReference type="PROSITE" id="PS01074">
    <property type="entry name" value="TERPENE_SYNTHASES"/>
    <property type="match status" value="1"/>
</dbReference>
<protein>
    <recommendedName>
        <fullName>Cycloartenol synthase 2</fullName>
        <ecNumber>5.4.99.8</ecNumber>
    </recommendedName>
</protein>
<name>CAS2_BETPL</name>
<keyword id="KW-0413">Isomerase</keyword>
<keyword id="KW-0677">Repeat</keyword>
<gene>
    <name type="primary">CASBPX2</name>
</gene>
<comment type="function">
    <text evidence="2">Oxidosqualene cyclase converting oxidosqualene to cycloartenol.</text>
</comment>
<comment type="catalytic activity">
    <reaction evidence="2">
        <text>(S)-2,3-epoxysqualene = cycloartenol</text>
        <dbReference type="Rhea" id="RHEA:21308"/>
        <dbReference type="ChEBI" id="CHEBI:15441"/>
        <dbReference type="ChEBI" id="CHEBI:17030"/>
        <dbReference type="EC" id="5.4.99.8"/>
    </reaction>
</comment>
<comment type="similarity">
    <text evidence="3">Belongs to the terpene cyclase/mutase family.</text>
</comment>
<evidence type="ECO:0000250" key="1">
    <source>
        <dbReference type="UniProtKB" id="P48449"/>
    </source>
</evidence>
<evidence type="ECO:0000269" key="2">
    <source>
    </source>
</evidence>
<evidence type="ECO:0000305" key="3"/>
<feature type="chain" id="PRO_0000413991" description="Cycloartenol synthase 2">
    <location>
        <begin position="1"/>
        <end position="757"/>
    </location>
</feature>
<feature type="repeat" description="PFTB 1">
    <location>
        <begin position="147"/>
        <end position="188"/>
    </location>
</feature>
<feature type="repeat" description="PFTB 2">
    <location>
        <begin position="512"/>
        <end position="557"/>
    </location>
</feature>
<feature type="repeat" description="PFTB 3">
    <location>
        <begin position="589"/>
        <end position="629"/>
    </location>
</feature>
<feature type="repeat" description="PFTB 4">
    <location>
        <begin position="638"/>
        <end position="679"/>
    </location>
</feature>
<feature type="repeat" description="PFTB 5">
    <location>
        <begin position="700"/>
        <end position="741"/>
    </location>
</feature>
<feature type="active site" description="Proton donor" evidence="1">
    <location>
        <position position="483"/>
    </location>
</feature>
<sequence>MWKLKIAEGGSPWLRTLNNHVGRQVWEFDPKLGSPEELAEIERARETSLKVRFEKKHSSDLLMRIQFAKENPRGAVLPQVKVNETEDVTEEMVTRMLRRAISFHSTLQAHDGHWAGDYGGPMFLMPGLVITLSITGALNTVLSEEHKKEMCRYLYNHQNKDGGWGLHIEGPSTMFGTVLSYVTLRLLGEGANDGQGAIERGRKWILDHGSATAIISWGKMWLSVLGAFEWSGNNPLPPEIWLLPYMLPVHPGRMWCHCRMVYLPMSYLYGKRFVGPITPTVMSLRKELYSVPYHEIDWNQARNLCAKEXLYYPHPLVQDILWASLHKLVEPVLMRWPGKRLREKALRTVLEHIHYEDENTRYICIGPVNKVLNMLCCWVEDPNSEAFKLHLPRINDYLWIAEDGMKMQGYNGSQLWDTAFAVQAIISTNLFEEYGPTLEKAHMYIKKSQVREDCPGDLDFWYRHISKGAWPFSTADHGWPISDCTAEGLKAALLLSKIPPDVVGEPLVEERLYDAVNVILSLQNADGGFATYELTRSYPWLELINPAETFGDIVIDYNYVECTSAAIQALTSFKKSYPKHREEEVDVCIKRAAMFTEKIQASDGSWYGSWGVCFTYGTWFGVKGLVAAGKNFNDCFGIRKACDFLLSKQLPSGGWGESYLSCQNKVYSHVEGNRSHVVNTGWAMLALIEAGQAERDPTPLHRAARVLINSQMENGDFPQEEIMGVFNRNCMITYAAYRNIFPIWALGEYRCRVLQAP</sequence>
<reference key="1">
    <citation type="journal article" date="2003" name="Biol. Pharm. Bull.">
        <title>Oxidosqualene cyclases from cell suspension cultures of Betula platyphylla var. japonica: molecular evolution of oxidosqualene cyclases in higher plants.</title>
        <authorList>
            <person name="Zhang H."/>
            <person name="Shibuya M."/>
            <person name="Yokota S."/>
            <person name="Ebizuka Y."/>
        </authorList>
    </citation>
    <scope>NUCLEOTIDE SEQUENCE [MRNA]</scope>
    <scope>FUNCTION</scope>
    <scope>CATALYTIC ACTIVITY</scope>
</reference>